<proteinExistence type="inferred from homology"/>
<feature type="chain" id="PRO_1000015422" description="Large-conductance mechanosensitive channel">
    <location>
        <begin position="1"/>
        <end position="126"/>
    </location>
</feature>
<feature type="transmembrane region" description="Helical" evidence="1">
    <location>
        <begin position="14"/>
        <end position="34"/>
    </location>
</feature>
<feature type="transmembrane region" description="Helical" evidence="1">
    <location>
        <begin position="66"/>
        <end position="86"/>
    </location>
</feature>
<organism>
    <name type="scientific">Roseiflexus sp. (strain RS-1)</name>
    <dbReference type="NCBI Taxonomy" id="357808"/>
    <lineage>
        <taxon>Bacteria</taxon>
        <taxon>Bacillati</taxon>
        <taxon>Chloroflexota</taxon>
        <taxon>Chloroflexia</taxon>
        <taxon>Chloroflexales</taxon>
        <taxon>Roseiflexineae</taxon>
        <taxon>Roseiflexaceae</taxon>
        <taxon>Roseiflexus</taxon>
    </lineage>
</organism>
<gene>
    <name evidence="1" type="primary">mscL</name>
    <name type="ordered locus">RoseRS_2342</name>
</gene>
<protein>
    <recommendedName>
        <fullName evidence="1">Large-conductance mechanosensitive channel</fullName>
    </recommendedName>
</protein>
<keyword id="KW-1003">Cell membrane</keyword>
<keyword id="KW-0407">Ion channel</keyword>
<keyword id="KW-0406">Ion transport</keyword>
<keyword id="KW-0472">Membrane</keyword>
<keyword id="KW-0812">Transmembrane</keyword>
<keyword id="KW-1133">Transmembrane helix</keyword>
<keyword id="KW-0813">Transport</keyword>
<reference key="1">
    <citation type="submission" date="2007-04" db="EMBL/GenBank/DDBJ databases">
        <title>Complete sequence of Roseiflexus sp. RS-1.</title>
        <authorList>
            <consortium name="US DOE Joint Genome Institute"/>
            <person name="Copeland A."/>
            <person name="Lucas S."/>
            <person name="Lapidus A."/>
            <person name="Barry K."/>
            <person name="Detter J.C."/>
            <person name="Glavina del Rio T."/>
            <person name="Hammon N."/>
            <person name="Israni S."/>
            <person name="Dalin E."/>
            <person name="Tice H."/>
            <person name="Pitluck S."/>
            <person name="Chertkov O."/>
            <person name="Brettin T."/>
            <person name="Bruce D."/>
            <person name="Han C."/>
            <person name="Schmutz J."/>
            <person name="Larimer F."/>
            <person name="Land M."/>
            <person name="Hauser L."/>
            <person name="Kyrpides N."/>
            <person name="Mikhailova N."/>
            <person name="Bryant D.A."/>
            <person name="Richardson P."/>
        </authorList>
    </citation>
    <scope>NUCLEOTIDE SEQUENCE [LARGE SCALE GENOMIC DNA]</scope>
    <source>
        <strain>RS-1</strain>
    </source>
</reference>
<dbReference type="EMBL" id="CP000686">
    <property type="protein sequence ID" value="ABQ90721.1"/>
    <property type="molecule type" value="Genomic_DNA"/>
</dbReference>
<dbReference type="RefSeq" id="WP_011957067.1">
    <property type="nucleotide sequence ID" value="NC_009523.1"/>
</dbReference>
<dbReference type="SMR" id="A5UVR8"/>
<dbReference type="STRING" id="357808.RoseRS_2342"/>
<dbReference type="KEGG" id="rrs:RoseRS_2342"/>
<dbReference type="eggNOG" id="COG1970">
    <property type="taxonomic scope" value="Bacteria"/>
</dbReference>
<dbReference type="HOGENOM" id="CLU_095787_1_0_0"/>
<dbReference type="OrthoDB" id="9810350at2"/>
<dbReference type="Proteomes" id="UP000006554">
    <property type="component" value="Chromosome"/>
</dbReference>
<dbReference type="GO" id="GO:0005886">
    <property type="term" value="C:plasma membrane"/>
    <property type="evidence" value="ECO:0007669"/>
    <property type="project" value="UniProtKB-SubCell"/>
</dbReference>
<dbReference type="GO" id="GO:0008381">
    <property type="term" value="F:mechanosensitive monoatomic ion channel activity"/>
    <property type="evidence" value="ECO:0007669"/>
    <property type="project" value="UniProtKB-UniRule"/>
</dbReference>
<dbReference type="Gene3D" id="1.10.1200.120">
    <property type="entry name" value="Large-conductance mechanosensitive channel, MscL, domain 1"/>
    <property type="match status" value="1"/>
</dbReference>
<dbReference type="HAMAP" id="MF_00115">
    <property type="entry name" value="MscL"/>
    <property type="match status" value="1"/>
</dbReference>
<dbReference type="InterPro" id="IPR019823">
    <property type="entry name" value="Mechanosensitive_channel_CS"/>
</dbReference>
<dbReference type="InterPro" id="IPR001185">
    <property type="entry name" value="MS_channel"/>
</dbReference>
<dbReference type="InterPro" id="IPR037673">
    <property type="entry name" value="MSC/AndL"/>
</dbReference>
<dbReference type="InterPro" id="IPR036019">
    <property type="entry name" value="MscL_channel"/>
</dbReference>
<dbReference type="NCBIfam" id="TIGR00220">
    <property type="entry name" value="mscL"/>
    <property type="match status" value="1"/>
</dbReference>
<dbReference type="PANTHER" id="PTHR30266:SF2">
    <property type="entry name" value="LARGE-CONDUCTANCE MECHANOSENSITIVE CHANNEL"/>
    <property type="match status" value="1"/>
</dbReference>
<dbReference type="PANTHER" id="PTHR30266">
    <property type="entry name" value="MECHANOSENSITIVE CHANNEL MSCL"/>
    <property type="match status" value="1"/>
</dbReference>
<dbReference type="Pfam" id="PF01741">
    <property type="entry name" value="MscL"/>
    <property type="match status" value="1"/>
</dbReference>
<dbReference type="PRINTS" id="PR01264">
    <property type="entry name" value="MECHCHANNEL"/>
</dbReference>
<dbReference type="SUPFAM" id="SSF81330">
    <property type="entry name" value="Gated mechanosensitive channel"/>
    <property type="match status" value="1"/>
</dbReference>
<dbReference type="PROSITE" id="PS01327">
    <property type="entry name" value="MSCL"/>
    <property type="match status" value="1"/>
</dbReference>
<evidence type="ECO:0000255" key="1">
    <source>
        <dbReference type="HAMAP-Rule" id="MF_00115"/>
    </source>
</evidence>
<name>MSCL_ROSS1</name>
<sequence length="126" mass="13662">MFEGFKTFVMRGNVIDLAVGVVIGTAFSAVVNSLVNDILMAIVATLIGQPDFSDVLVFGAVRLGAFITTIVNFLIISAALYFLVVVPINKLSEFTRRNEPPPAPPAPSAEEKLLTEIRDLLRQNIT</sequence>
<comment type="function">
    <text evidence="1">Channel that opens in response to stretch forces in the membrane lipid bilayer. May participate in the regulation of osmotic pressure changes within the cell.</text>
</comment>
<comment type="subunit">
    <text evidence="1">Homopentamer.</text>
</comment>
<comment type="subcellular location">
    <subcellularLocation>
        <location evidence="1">Cell membrane</location>
        <topology evidence="1">Multi-pass membrane protein</topology>
    </subcellularLocation>
</comment>
<comment type="similarity">
    <text evidence="1">Belongs to the MscL family.</text>
</comment>
<accession>A5UVR8</accession>